<evidence type="ECO:0000255" key="1">
    <source>
        <dbReference type="HAMAP-Rule" id="MF_00134"/>
    </source>
</evidence>
<proteinExistence type="inferred from homology"/>
<accession>Q46WU7</accession>
<reference key="1">
    <citation type="journal article" date="2010" name="PLoS ONE">
        <title>The complete multipartite genome sequence of Cupriavidus necator JMP134, a versatile pollutant degrader.</title>
        <authorList>
            <person name="Lykidis A."/>
            <person name="Perez-Pantoja D."/>
            <person name="Ledger T."/>
            <person name="Mavromatis K."/>
            <person name="Anderson I.J."/>
            <person name="Ivanova N.N."/>
            <person name="Hooper S.D."/>
            <person name="Lapidus A."/>
            <person name="Lucas S."/>
            <person name="Gonzalez B."/>
            <person name="Kyrpides N.C."/>
        </authorList>
    </citation>
    <scope>NUCLEOTIDE SEQUENCE [LARGE SCALE GENOMIC DNA]</scope>
    <source>
        <strain>JMP134 / LMG 1197</strain>
    </source>
</reference>
<sequence length="267" mass="28992">MSDILDKILAVKADEVSAARKKRDLPSLRAEAESLRNEAGFAPRGFERSLRDKIAAGHAGVIAEVKKASPSKGVLRENFVPEAIAESYASHGAACLSVLTDVNFFQGHADYLKRARGACPLPALRKDFMVDLYQVYEARSWGADCILLIVAALDPGLMADLEACAHELGMDVLVEVHGADELDSALRLKTPLLGVNNRNLRTFEVSLDNTLDLLPSMPADRLVVTESGILGPNDVKRMRDADVHAFLVGEAFMRAKDPGVELARLFA</sequence>
<organism>
    <name type="scientific">Cupriavidus pinatubonensis (strain JMP 134 / LMG 1197)</name>
    <name type="common">Cupriavidus necator (strain JMP 134)</name>
    <dbReference type="NCBI Taxonomy" id="264198"/>
    <lineage>
        <taxon>Bacteria</taxon>
        <taxon>Pseudomonadati</taxon>
        <taxon>Pseudomonadota</taxon>
        <taxon>Betaproteobacteria</taxon>
        <taxon>Burkholderiales</taxon>
        <taxon>Burkholderiaceae</taxon>
        <taxon>Cupriavidus</taxon>
    </lineage>
</organism>
<name>TRPC_CUPPJ</name>
<gene>
    <name evidence="1" type="primary">trpC</name>
    <name type="ordered locus">Reut_A3026</name>
</gene>
<keyword id="KW-0028">Amino-acid biosynthesis</keyword>
<keyword id="KW-0057">Aromatic amino acid biosynthesis</keyword>
<keyword id="KW-0210">Decarboxylase</keyword>
<keyword id="KW-0456">Lyase</keyword>
<keyword id="KW-0822">Tryptophan biosynthesis</keyword>
<protein>
    <recommendedName>
        <fullName evidence="1">Indole-3-glycerol phosphate synthase</fullName>
        <shortName evidence="1">IGPS</shortName>
        <ecNumber evidence="1">4.1.1.48</ecNumber>
    </recommendedName>
</protein>
<feature type="chain" id="PRO_1000018539" description="Indole-3-glycerol phosphate synthase">
    <location>
        <begin position="1"/>
        <end position="267"/>
    </location>
</feature>
<dbReference type="EC" id="4.1.1.48" evidence="1"/>
<dbReference type="EMBL" id="CP000090">
    <property type="protein sequence ID" value="AAZ62386.1"/>
    <property type="molecule type" value="Genomic_DNA"/>
</dbReference>
<dbReference type="SMR" id="Q46WU7"/>
<dbReference type="STRING" id="264198.Reut_A3026"/>
<dbReference type="KEGG" id="reu:Reut_A3026"/>
<dbReference type="eggNOG" id="COG0134">
    <property type="taxonomic scope" value="Bacteria"/>
</dbReference>
<dbReference type="HOGENOM" id="CLU_034247_2_0_4"/>
<dbReference type="OrthoDB" id="9804217at2"/>
<dbReference type="UniPathway" id="UPA00035">
    <property type="reaction ID" value="UER00043"/>
</dbReference>
<dbReference type="GO" id="GO:0004425">
    <property type="term" value="F:indole-3-glycerol-phosphate synthase activity"/>
    <property type="evidence" value="ECO:0007669"/>
    <property type="project" value="UniProtKB-UniRule"/>
</dbReference>
<dbReference type="GO" id="GO:0004640">
    <property type="term" value="F:phosphoribosylanthranilate isomerase activity"/>
    <property type="evidence" value="ECO:0007669"/>
    <property type="project" value="TreeGrafter"/>
</dbReference>
<dbReference type="GO" id="GO:0000162">
    <property type="term" value="P:L-tryptophan biosynthetic process"/>
    <property type="evidence" value="ECO:0007669"/>
    <property type="project" value="UniProtKB-UniRule"/>
</dbReference>
<dbReference type="CDD" id="cd00331">
    <property type="entry name" value="IGPS"/>
    <property type="match status" value="1"/>
</dbReference>
<dbReference type="FunFam" id="3.20.20.70:FF:000024">
    <property type="entry name" value="Indole-3-glycerol phosphate synthase"/>
    <property type="match status" value="1"/>
</dbReference>
<dbReference type="Gene3D" id="3.20.20.70">
    <property type="entry name" value="Aldolase class I"/>
    <property type="match status" value="1"/>
</dbReference>
<dbReference type="HAMAP" id="MF_00134_B">
    <property type="entry name" value="IGPS_B"/>
    <property type="match status" value="1"/>
</dbReference>
<dbReference type="InterPro" id="IPR013785">
    <property type="entry name" value="Aldolase_TIM"/>
</dbReference>
<dbReference type="InterPro" id="IPR045186">
    <property type="entry name" value="Indole-3-glycerol_P_synth"/>
</dbReference>
<dbReference type="InterPro" id="IPR013798">
    <property type="entry name" value="Indole-3-glycerol_P_synth_dom"/>
</dbReference>
<dbReference type="InterPro" id="IPR001468">
    <property type="entry name" value="Indole-3-GlycerolPSynthase_CS"/>
</dbReference>
<dbReference type="InterPro" id="IPR011060">
    <property type="entry name" value="RibuloseP-bd_barrel"/>
</dbReference>
<dbReference type="NCBIfam" id="NF001373">
    <property type="entry name" value="PRK00278.1-6"/>
    <property type="match status" value="1"/>
</dbReference>
<dbReference type="NCBIfam" id="NF001377">
    <property type="entry name" value="PRK00278.2-4"/>
    <property type="match status" value="1"/>
</dbReference>
<dbReference type="PANTHER" id="PTHR22854:SF2">
    <property type="entry name" value="INDOLE-3-GLYCEROL-PHOSPHATE SYNTHASE"/>
    <property type="match status" value="1"/>
</dbReference>
<dbReference type="PANTHER" id="PTHR22854">
    <property type="entry name" value="TRYPTOPHAN BIOSYNTHESIS PROTEIN"/>
    <property type="match status" value="1"/>
</dbReference>
<dbReference type="Pfam" id="PF00218">
    <property type="entry name" value="IGPS"/>
    <property type="match status" value="1"/>
</dbReference>
<dbReference type="SUPFAM" id="SSF51366">
    <property type="entry name" value="Ribulose-phoshate binding barrel"/>
    <property type="match status" value="1"/>
</dbReference>
<dbReference type="PROSITE" id="PS00614">
    <property type="entry name" value="IGPS"/>
    <property type="match status" value="1"/>
</dbReference>
<comment type="catalytic activity">
    <reaction evidence="1">
        <text>1-(2-carboxyphenylamino)-1-deoxy-D-ribulose 5-phosphate + H(+) = (1S,2R)-1-C-(indol-3-yl)glycerol 3-phosphate + CO2 + H2O</text>
        <dbReference type="Rhea" id="RHEA:23476"/>
        <dbReference type="ChEBI" id="CHEBI:15377"/>
        <dbReference type="ChEBI" id="CHEBI:15378"/>
        <dbReference type="ChEBI" id="CHEBI:16526"/>
        <dbReference type="ChEBI" id="CHEBI:58613"/>
        <dbReference type="ChEBI" id="CHEBI:58866"/>
        <dbReference type="EC" id="4.1.1.48"/>
    </reaction>
</comment>
<comment type="pathway">
    <text evidence="1">Amino-acid biosynthesis; L-tryptophan biosynthesis; L-tryptophan from chorismate: step 4/5.</text>
</comment>
<comment type="similarity">
    <text evidence="1">Belongs to the TrpC family.</text>
</comment>